<protein>
    <recommendedName>
        <fullName evidence="1">Large ribosomal subunit protein uL1</fullName>
    </recommendedName>
    <alternativeName>
        <fullName evidence="2">50S ribosomal protein L1</fullName>
    </alternativeName>
</protein>
<comment type="function">
    <text evidence="1">Binds directly to 23S rRNA. The L1 stalk is quite mobile in the ribosome, and is involved in E site tRNA release.</text>
</comment>
<comment type="function">
    <text evidence="1">Protein L1 is also a translational repressor protein, it controls the translation of the L11 operon by binding to its mRNA.</text>
</comment>
<comment type="subunit">
    <text evidence="1">Part of the 50S ribosomal subunit.</text>
</comment>
<comment type="similarity">
    <text evidence="1">Belongs to the universal ribosomal protein uL1 family.</text>
</comment>
<keyword id="KW-0678">Repressor</keyword>
<keyword id="KW-0687">Ribonucleoprotein</keyword>
<keyword id="KW-0689">Ribosomal protein</keyword>
<keyword id="KW-0694">RNA-binding</keyword>
<keyword id="KW-0699">rRNA-binding</keyword>
<keyword id="KW-0810">Translation regulation</keyword>
<keyword id="KW-0820">tRNA-binding</keyword>
<gene>
    <name evidence="1" type="primary">rplA</name>
    <name evidence="1" type="synonym">rpl1</name>
    <name type="ordered locus">NATL1_02791</name>
</gene>
<name>RL1_PROM1</name>
<organism>
    <name type="scientific">Prochlorococcus marinus (strain NATL1A)</name>
    <dbReference type="NCBI Taxonomy" id="167555"/>
    <lineage>
        <taxon>Bacteria</taxon>
        <taxon>Bacillati</taxon>
        <taxon>Cyanobacteriota</taxon>
        <taxon>Cyanophyceae</taxon>
        <taxon>Synechococcales</taxon>
        <taxon>Prochlorococcaceae</taxon>
        <taxon>Prochlorococcus</taxon>
    </lineage>
</organism>
<accession>A2C033</accession>
<dbReference type="EMBL" id="CP000553">
    <property type="protein sequence ID" value="ABM74843.1"/>
    <property type="molecule type" value="Genomic_DNA"/>
</dbReference>
<dbReference type="RefSeq" id="WP_011294203.1">
    <property type="nucleotide sequence ID" value="NC_008819.1"/>
</dbReference>
<dbReference type="SMR" id="A2C033"/>
<dbReference type="KEGG" id="pme:NATL1_02791"/>
<dbReference type="eggNOG" id="COG0081">
    <property type="taxonomic scope" value="Bacteria"/>
</dbReference>
<dbReference type="HOGENOM" id="CLU_062853_0_0_3"/>
<dbReference type="Proteomes" id="UP000002592">
    <property type="component" value="Chromosome"/>
</dbReference>
<dbReference type="GO" id="GO:0015934">
    <property type="term" value="C:large ribosomal subunit"/>
    <property type="evidence" value="ECO:0007669"/>
    <property type="project" value="InterPro"/>
</dbReference>
<dbReference type="GO" id="GO:0019843">
    <property type="term" value="F:rRNA binding"/>
    <property type="evidence" value="ECO:0007669"/>
    <property type="project" value="UniProtKB-UniRule"/>
</dbReference>
<dbReference type="GO" id="GO:0003735">
    <property type="term" value="F:structural constituent of ribosome"/>
    <property type="evidence" value="ECO:0007669"/>
    <property type="project" value="InterPro"/>
</dbReference>
<dbReference type="GO" id="GO:0000049">
    <property type="term" value="F:tRNA binding"/>
    <property type="evidence" value="ECO:0007669"/>
    <property type="project" value="UniProtKB-KW"/>
</dbReference>
<dbReference type="GO" id="GO:0006417">
    <property type="term" value="P:regulation of translation"/>
    <property type="evidence" value="ECO:0007669"/>
    <property type="project" value="UniProtKB-KW"/>
</dbReference>
<dbReference type="GO" id="GO:0006412">
    <property type="term" value="P:translation"/>
    <property type="evidence" value="ECO:0007669"/>
    <property type="project" value="UniProtKB-UniRule"/>
</dbReference>
<dbReference type="CDD" id="cd00403">
    <property type="entry name" value="Ribosomal_L1"/>
    <property type="match status" value="1"/>
</dbReference>
<dbReference type="FunFam" id="3.40.50.790:FF:000001">
    <property type="entry name" value="50S ribosomal protein L1"/>
    <property type="match status" value="1"/>
</dbReference>
<dbReference type="Gene3D" id="3.30.190.20">
    <property type="match status" value="1"/>
</dbReference>
<dbReference type="Gene3D" id="3.40.50.790">
    <property type="match status" value="1"/>
</dbReference>
<dbReference type="HAMAP" id="MF_01318_B">
    <property type="entry name" value="Ribosomal_uL1_B"/>
    <property type="match status" value="1"/>
</dbReference>
<dbReference type="InterPro" id="IPR005878">
    <property type="entry name" value="Ribosom_uL1_bac-type"/>
</dbReference>
<dbReference type="InterPro" id="IPR002143">
    <property type="entry name" value="Ribosomal_uL1"/>
</dbReference>
<dbReference type="InterPro" id="IPR023674">
    <property type="entry name" value="Ribosomal_uL1-like"/>
</dbReference>
<dbReference type="InterPro" id="IPR028364">
    <property type="entry name" value="Ribosomal_uL1/biogenesis"/>
</dbReference>
<dbReference type="InterPro" id="IPR016095">
    <property type="entry name" value="Ribosomal_uL1_3-a/b-sand"/>
</dbReference>
<dbReference type="InterPro" id="IPR023673">
    <property type="entry name" value="Ribosomal_uL1_CS"/>
</dbReference>
<dbReference type="NCBIfam" id="TIGR01169">
    <property type="entry name" value="rplA_bact"/>
    <property type="match status" value="1"/>
</dbReference>
<dbReference type="PANTHER" id="PTHR36427">
    <property type="entry name" value="54S RIBOSOMAL PROTEIN L1, MITOCHONDRIAL"/>
    <property type="match status" value="1"/>
</dbReference>
<dbReference type="PANTHER" id="PTHR36427:SF3">
    <property type="entry name" value="LARGE RIBOSOMAL SUBUNIT PROTEIN UL1M"/>
    <property type="match status" value="1"/>
</dbReference>
<dbReference type="Pfam" id="PF00687">
    <property type="entry name" value="Ribosomal_L1"/>
    <property type="match status" value="1"/>
</dbReference>
<dbReference type="PIRSF" id="PIRSF002155">
    <property type="entry name" value="Ribosomal_L1"/>
    <property type="match status" value="1"/>
</dbReference>
<dbReference type="SUPFAM" id="SSF56808">
    <property type="entry name" value="Ribosomal protein L1"/>
    <property type="match status" value="1"/>
</dbReference>
<dbReference type="PROSITE" id="PS01199">
    <property type="entry name" value="RIBOSOMAL_L1"/>
    <property type="match status" value="1"/>
</dbReference>
<sequence>MKNFSKRMTTLLSKVEERSYSPIEAIKLVKENANAKFDETIEAHIRLGIDPKYTDQQLRTTVALPSGTGQKIRIAVVTRGEKVNEATKAGADLAGEEDLVDSINKGEMNFDLLISTPDMMPKVAKLGRVLGPRGLMPNPKAGTVTTDLEGAIKEFKAGKLEFRADKAGIVHVRFGKASFSEEALLENLKTLQTTIEKNKPSGAKGKFWRSFFITSTMGPSVEVDINELQDLQKEK</sequence>
<reference key="1">
    <citation type="journal article" date="2007" name="PLoS Genet.">
        <title>Patterns and implications of gene gain and loss in the evolution of Prochlorococcus.</title>
        <authorList>
            <person name="Kettler G.C."/>
            <person name="Martiny A.C."/>
            <person name="Huang K."/>
            <person name="Zucker J."/>
            <person name="Coleman M.L."/>
            <person name="Rodrigue S."/>
            <person name="Chen F."/>
            <person name="Lapidus A."/>
            <person name="Ferriera S."/>
            <person name="Johnson J."/>
            <person name="Steglich C."/>
            <person name="Church G.M."/>
            <person name="Richardson P."/>
            <person name="Chisholm S.W."/>
        </authorList>
    </citation>
    <scope>NUCLEOTIDE SEQUENCE [LARGE SCALE GENOMIC DNA]</scope>
    <source>
        <strain>NATL1A</strain>
    </source>
</reference>
<feature type="chain" id="PRO_0000308074" description="Large ribosomal subunit protein uL1">
    <location>
        <begin position="1"/>
        <end position="235"/>
    </location>
</feature>
<proteinExistence type="inferred from homology"/>
<evidence type="ECO:0000255" key="1">
    <source>
        <dbReference type="HAMAP-Rule" id="MF_01318"/>
    </source>
</evidence>
<evidence type="ECO:0000305" key="2"/>